<proteinExistence type="inferred from homology"/>
<evidence type="ECO:0000250" key="1">
    <source>
        <dbReference type="UniProtKB" id="P50389"/>
    </source>
</evidence>
<evidence type="ECO:0000255" key="2">
    <source>
        <dbReference type="HAMAP-Rule" id="MF_01627"/>
    </source>
</evidence>
<evidence type="ECO:0000305" key="3"/>
<keyword id="KW-0328">Glycosyltransferase</keyword>
<keyword id="KW-0808">Transferase</keyword>
<organism>
    <name type="scientific">Vibrio vulnificus (strain YJ016)</name>
    <dbReference type="NCBI Taxonomy" id="196600"/>
    <lineage>
        <taxon>Bacteria</taxon>
        <taxon>Pseudomonadati</taxon>
        <taxon>Pseudomonadota</taxon>
        <taxon>Gammaproteobacteria</taxon>
        <taxon>Vibrionales</taxon>
        <taxon>Vibrionaceae</taxon>
        <taxon>Vibrio</taxon>
    </lineage>
</organism>
<protein>
    <recommendedName>
        <fullName evidence="2">Purine nucleoside phosphorylase DeoD-type 1</fullName>
        <shortName evidence="2">PNP 1</shortName>
        <ecNumber evidence="2">2.4.2.1</ecNumber>
    </recommendedName>
</protein>
<feature type="chain" id="PRO_0000063178" description="Purine nucleoside phosphorylase DeoD-type 1">
    <location>
        <begin position="1"/>
        <end position="239"/>
    </location>
</feature>
<feature type="active site" description="Proton donor" evidence="2">
    <location>
        <position position="205"/>
    </location>
</feature>
<feature type="binding site" evidence="1">
    <location>
        <position position="5"/>
    </location>
    <ligand>
        <name>a purine D-ribonucleoside</name>
        <dbReference type="ChEBI" id="CHEBI:142355"/>
        <note>ligand shared between dimeric partners</note>
    </ligand>
</feature>
<feature type="binding site" description="in other chain" evidence="1">
    <location>
        <position position="21"/>
    </location>
    <ligand>
        <name>phosphate</name>
        <dbReference type="ChEBI" id="CHEBI:43474"/>
        <note>ligand shared between dimeric partners</note>
    </ligand>
</feature>
<feature type="binding site" description="in other chain" evidence="1">
    <location>
        <position position="25"/>
    </location>
    <ligand>
        <name>phosphate</name>
        <dbReference type="ChEBI" id="CHEBI:43474"/>
        <note>ligand shared between dimeric partners</note>
    </ligand>
</feature>
<feature type="binding site" evidence="1">
    <location>
        <position position="44"/>
    </location>
    <ligand>
        <name>phosphate</name>
        <dbReference type="ChEBI" id="CHEBI:43474"/>
        <note>ligand shared between dimeric partners</note>
    </ligand>
</feature>
<feature type="binding site" description="in other chain" evidence="1">
    <location>
        <begin position="88"/>
        <end position="91"/>
    </location>
    <ligand>
        <name>phosphate</name>
        <dbReference type="ChEBI" id="CHEBI:43474"/>
        <note>ligand shared between dimeric partners</note>
    </ligand>
</feature>
<feature type="binding site" description="in other chain" evidence="1">
    <location>
        <begin position="180"/>
        <end position="182"/>
    </location>
    <ligand>
        <name>a purine D-ribonucleoside</name>
        <dbReference type="ChEBI" id="CHEBI:142355"/>
        <note>ligand shared between dimeric partners</note>
    </ligand>
</feature>
<feature type="binding site" description="in other chain" evidence="1">
    <location>
        <begin position="204"/>
        <end position="205"/>
    </location>
    <ligand>
        <name>a purine D-ribonucleoside</name>
        <dbReference type="ChEBI" id="CHEBI:142355"/>
        <note>ligand shared between dimeric partners</note>
    </ligand>
</feature>
<feature type="site" description="Important for catalytic activity" evidence="2">
    <location>
        <position position="218"/>
    </location>
</feature>
<gene>
    <name evidence="2" type="primary">deoD1</name>
    <name type="ordered locus">VV2676</name>
</gene>
<accession>Q7MI41</accession>
<dbReference type="EC" id="2.4.2.1" evidence="2"/>
<dbReference type="EMBL" id="BA000037">
    <property type="protein sequence ID" value="BAC95440.1"/>
    <property type="status" value="ALT_INIT"/>
    <property type="molecule type" value="Genomic_DNA"/>
</dbReference>
<dbReference type="SMR" id="Q7MI41"/>
<dbReference type="STRING" id="672.VV93_v1c23970"/>
<dbReference type="KEGG" id="vvy:VV2676"/>
<dbReference type="eggNOG" id="COG0813">
    <property type="taxonomic scope" value="Bacteria"/>
</dbReference>
<dbReference type="HOGENOM" id="CLU_068457_2_0_6"/>
<dbReference type="Proteomes" id="UP000002675">
    <property type="component" value="Chromosome I"/>
</dbReference>
<dbReference type="GO" id="GO:0005829">
    <property type="term" value="C:cytosol"/>
    <property type="evidence" value="ECO:0007669"/>
    <property type="project" value="TreeGrafter"/>
</dbReference>
<dbReference type="GO" id="GO:0004731">
    <property type="term" value="F:purine-nucleoside phosphorylase activity"/>
    <property type="evidence" value="ECO:0007669"/>
    <property type="project" value="UniProtKB-UniRule"/>
</dbReference>
<dbReference type="GO" id="GO:0006152">
    <property type="term" value="P:purine nucleoside catabolic process"/>
    <property type="evidence" value="ECO:0007669"/>
    <property type="project" value="TreeGrafter"/>
</dbReference>
<dbReference type="CDD" id="cd09006">
    <property type="entry name" value="PNP_EcPNPI-like"/>
    <property type="match status" value="1"/>
</dbReference>
<dbReference type="FunFam" id="3.40.50.1580:FF:000002">
    <property type="entry name" value="Purine nucleoside phosphorylase DeoD-type"/>
    <property type="match status" value="1"/>
</dbReference>
<dbReference type="Gene3D" id="3.40.50.1580">
    <property type="entry name" value="Nucleoside phosphorylase domain"/>
    <property type="match status" value="1"/>
</dbReference>
<dbReference type="HAMAP" id="MF_01627">
    <property type="entry name" value="Pur_nucleosid_phosp"/>
    <property type="match status" value="1"/>
</dbReference>
<dbReference type="InterPro" id="IPR004402">
    <property type="entry name" value="DeoD-type"/>
</dbReference>
<dbReference type="InterPro" id="IPR018016">
    <property type="entry name" value="Nucleoside_phosphorylase_CS"/>
</dbReference>
<dbReference type="InterPro" id="IPR000845">
    <property type="entry name" value="Nucleoside_phosphorylase_d"/>
</dbReference>
<dbReference type="InterPro" id="IPR035994">
    <property type="entry name" value="Nucleoside_phosphorylase_sf"/>
</dbReference>
<dbReference type="NCBIfam" id="TIGR00107">
    <property type="entry name" value="deoD"/>
    <property type="match status" value="1"/>
</dbReference>
<dbReference type="NCBIfam" id="NF004489">
    <property type="entry name" value="PRK05819.1"/>
    <property type="match status" value="1"/>
</dbReference>
<dbReference type="NCBIfam" id="NF009914">
    <property type="entry name" value="PRK13374.1"/>
    <property type="match status" value="1"/>
</dbReference>
<dbReference type="PANTHER" id="PTHR43691:SF2">
    <property type="entry name" value="PURINE NUCLEOSIDE PHOSPHORYLASE DEOD-TYPE"/>
    <property type="match status" value="1"/>
</dbReference>
<dbReference type="PANTHER" id="PTHR43691">
    <property type="entry name" value="URIDINE PHOSPHORYLASE"/>
    <property type="match status" value="1"/>
</dbReference>
<dbReference type="Pfam" id="PF01048">
    <property type="entry name" value="PNP_UDP_1"/>
    <property type="match status" value="1"/>
</dbReference>
<dbReference type="SUPFAM" id="SSF53167">
    <property type="entry name" value="Purine and uridine phosphorylases"/>
    <property type="match status" value="1"/>
</dbReference>
<dbReference type="PROSITE" id="PS01232">
    <property type="entry name" value="PNP_UDP_1"/>
    <property type="match status" value="1"/>
</dbReference>
<sequence length="239" mass="25885">MATPHINAEMGDFADVVLMPGDPLRAKYIAETFLEDVVQVCDVRNMYGFTGTYKGRKVSVMGHGMGIPSCSIYATELIKDYGVKKIIRVGSCGAVSTDIKVRDVVIGMGACTDSKVNRIRFKGHDFAAIADYKMVKAAEEAAKARGIDVKVGNLFSAELFYTPDPEMFDVMDKYGIVGVEMEAAGIYGVAAEYGAKALTICTVSDHIKTGEQTTSEERQNTFNDMMIVALDSVLLGDAE</sequence>
<reference key="1">
    <citation type="journal article" date="2003" name="Genome Res.">
        <title>Comparative genome analysis of Vibrio vulnificus, a marine pathogen.</title>
        <authorList>
            <person name="Chen C.-Y."/>
            <person name="Wu K.-M."/>
            <person name="Chang Y.-C."/>
            <person name="Chang C.-H."/>
            <person name="Tsai H.-C."/>
            <person name="Liao T.-L."/>
            <person name="Liu Y.-M."/>
            <person name="Chen H.-J."/>
            <person name="Shen A.B.-T."/>
            <person name="Li J.-C."/>
            <person name="Su T.-L."/>
            <person name="Shao C.-P."/>
            <person name="Lee C.-T."/>
            <person name="Hor L.-I."/>
            <person name="Tsai S.-F."/>
        </authorList>
    </citation>
    <scope>NUCLEOTIDE SEQUENCE [LARGE SCALE GENOMIC DNA]</scope>
    <source>
        <strain>YJ016</strain>
    </source>
</reference>
<comment type="function">
    <text evidence="2">Catalyzes the reversible phosphorolytic breakdown of the N-glycosidic bond in the beta-(deoxy)ribonucleoside molecules, with the formation of the corresponding free purine bases and pentose-1-phosphate.</text>
</comment>
<comment type="catalytic activity">
    <reaction evidence="2">
        <text>a purine D-ribonucleoside + phosphate = a purine nucleobase + alpha-D-ribose 1-phosphate</text>
        <dbReference type="Rhea" id="RHEA:19805"/>
        <dbReference type="ChEBI" id="CHEBI:26386"/>
        <dbReference type="ChEBI" id="CHEBI:43474"/>
        <dbReference type="ChEBI" id="CHEBI:57720"/>
        <dbReference type="ChEBI" id="CHEBI:142355"/>
        <dbReference type="EC" id="2.4.2.1"/>
    </reaction>
</comment>
<comment type="catalytic activity">
    <reaction evidence="2">
        <text>a purine 2'-deoxy-D-ribonucleoside + phosphate = a purine nucleobase + 2-deoxy-alpha-D-ribose 1-phosphate</text>
        <dbReference type="Rhea" id="RHEA:36431"/>
        <dbReference type="ChEBI" id="CHEBI:26386"/>
        <dbReference type="ChEBI" id="CHEBI:43474"/>
        <dbReference type="ChEBI" id="CHEBI:57259"/>
        <dbReference type="ChEBI" id="CHEBI:142361"/>
        <dbReference type="EC" id="2.4.2.1"/>
    </reaction>
</comment>
<comment type="subunit">
    <text evidence="2">Homohexamer; trimer of homodimers.</text>
</comment>
<comment type="similarity">
    <text evidence="2">Belongs to the PNP/UDP phosphorylase family.</text>
</comment>
<comment type="sequence caution" evidence="3">
    <conflict type="erroneous initiation">
        <sequence resource="EMBL-CDS" id="BAC95440"/>
    </conflict>
</comment>
<name>DEOD1_VIBVY</name>